<organism>
    <name type="scientific">Arabidopsis thaliana</name>
    <name type="common">Mouse-ear cress</name>
    <dbReference type="NCBI Taxonomy" id="3702"/>
    <lineage>
        <taxon>Eukaryota</taxon>
        <taxon>Viridiplantae</taxon>
        <taxon>Streptophyta</taxon>
        <taxon>Embryophyta</taxon>
        <taxon>Tracheophyta</taxon>
        <taxon>Spermatophyta</taxon>
        <taxon>Magnoliopsida</taxon>
        <taxon>eudicotyledons</taxon>
        <taxon>Gunneridae</taxon>
        <taxon>Pentapetalae</taxon>
        <taxon>rosids</taxon>
        <taxon>malvids</taxon>
        <taxon>Brassicales</taxon>
        <taxon>Brassicaceae</taxon>
        <taxon>Camelineae</taxon>
        <taxon>Arabidopsis</taxon>
    </lineage>
</organism>
<comment type="similarity">
    <text evidence="2">Belongs to the UDP-glycosyltransferase family.</text>
</comment>
<comment type="sequence caution" evidence="2">
    <conflict type="erroneous gene model prediction">
        <sequence resource="EMBL-CDS" id="AAD30619"/>
    </conflict>
    <text>The predicted gene At1g05670 has been split into 2 genes: At1g05670 and At1g05675.</text>
</comment>
<evidence type="ECO:0000250" key="1"/>
<evidence type="ECO:0000305" key="2"/>
<proteinExistence type="inferred from homology"/>
<keyword id="KW-0328">Glycosyltransferase</keyword>
<keyword id="KW-1185">Reference proteome</keyword>
<keyword id="KW-0808">Transferase</keyword>
<dbReference type="EC" id="2.4.1.-"/>
<dbReference type="EMBL" id="AC007153">
    <property type="protein sequence ID" value="AAD30619.1"/>
    <property type="status" value="ALT_SEQ"/>
    <property type="molecule type" value="Genomic_DNA"/>
</dbReference>
<dbReference type="EMBL" id="CP002684">
    <property type="protein sequence ID" value="AEE27875.1"/>
    <property type="molecule type" value="Genomic_DNA"/>
</dbReference>
<dbReference type="PIR" id="H86190">
    <property type="entry name" value="H86190"/>
</dbReference>
<dbReference type="RefSeq" id="NP_001184915.1">
    <property type="nucleotide sequence ID" value="NM_001197986.1"/>
</dbReference>
<dbReference type="SMR" id="P0C7P7"/>
<dbReference type="FunCoup" id="P0C7P7">
    <property type="interactions" value="113"/>
</dbReference>
<dbReference type="IntAct" id="P0C7P7">
    <property type="interactions" value="1"/>
</dbReference>
<dbReference type="STRING" id="3702.P0C7P7"/>
<dbReference type="CAZy" id="GT1">
    <property type="family name" value="Glycosyltransferase Family 1"/>
</dbReference>
<dbReference type="GlyGen" id="P0C7P7">
    <property type="glycosylation" value="1 site"/>
</dbReference>
<dbReference type="PaxDb" id="3702-AT1G05675.1"/>
<dbReference type="ProteomicsDB" id="228676"/>
<dbReference type="EnsemblPlants" id="AT1G05675.1">
    <property type="protein sequence ID" value="AT1G05675.1"/>
    <property type="gene ID" value="AT1G05675"/>
</dbReference>
<dbReference type="GeneID" id="10723139"/>
<dbReference type="Gramene" id="AT1G05675.1">
    <property type="protein sequence ID" value="AT1G05675.1"/>
    <property type="gene ID" value="AT1G05675"/>
</dbReference>
<dbReference type="KEGG" id="ath:AT1G05675"/>
<dbReference type="Araport" id="AT1G05675"/>
<dbReference type="TAIR" id="AT1G05675"/>
<dbReference type="eggNOG" id="KOG1192">
    <property type="taxonomic scope" value="Eukaryota"/>
</dbReference>
<dbReference type="HOGENOM" id="CLU_001724_0_1_1"/>
<dbReference type="InParanoid" id="P0C7P7"/>
<dbReference type="OMA" id="FVAKISH"/>
<dbReference type="OrthoDB" id="5835829at2759"/>
<dbReference type="PhylomeDB" id="P0C7P7"/>
<dbReference type="PRO" id="PR:P0C7P7"/>
<dbReference type="Proteomes" id="UP000006548">
    <property type="component" value="Chromosome 1"/>
</dbReference>
<dbReference type="ExpressionAtlas" id="P0C7P7">
    <property type="expression patterns" value="baseline and differential"/>
</dbReference>
<dbReference type="GO" id="GO:0035251">
    <property type="term" value="F:UDP-glucosyltransferase activity"/>
    <property type="evidence" value="ECO:0007669"/>
    <property type="project" value="UniProtKB-ARBA"/>
</dbReference>
<dbReference type="CDD" id="cd03784">
    <property type="entry name" value="GT1_Gtf-like"/>
    <property type="match status" value="1"/>
</dbReference>
<dbReference type="FunFam" id="3.40.50.2000:FF:000019">
    <property type="entry name" value="Glycosyltransferase"/>
    <property type="match status" value="1"/>
</dbReference>
<dbReference type="FunFam" id="3.40.50.2000:FF:000057">
    <property type="entry name" value="Glycosyltransferase"/>
    <property type="match status" value="1"/>
</dbReference>
<dbReference type="Gene3D" id="3.40.50.2000">
    <property type="entry name" value="Glycogen Phosphorylase B"/>
    <property type="match status" value="2"/>
</dbReference>
<dbReference type="InterPro" id="IPR002213">
    <property type="entry name" value="UDP_glucos_trans"/>
</dbReference>
<dbReference type="InterPro" id="IPR035595">
    <property type="entry name" value="UDP_glycos_trans_CS"/>
</dbReference>
<dbReference type="PANTHER" id="PTHR11926">
    <property type="entry name" value="GLUCOSYL/GLUCURONOSYL TRANSFERASES"/>
    <property type="match status" value="1"/>
</dbReference>
<dbReference type="PANTHER" id="PTHR11926:SF1560">
    <property type="entry name" value="UDP-GLYCOSYLTRANSFERASE 74E1-RELATED"/>
    <property type="match status" value="1"/>
</dbReference>
<dbReference type="Pfam" id="PF00201">
    <property type="entry name" value="UDPGT"/>
    <property type="match status" value="1"/>
</dbReference>
<dbReference type="SUPFAM" id="SSF53756">
    <property type="entry name" value="UDP-Glycosyltransferase/glycogen phosphorylase"/>
    <property type="match status" value="1"/>
</dbReference>
<dbReference type="PROSITE" id="PS00375">
    <property type="entry name" value="UDPGT"/>
    <property type="match status" value="1"/>
</dbReference>
<feature type="chain" id="PRO_0000342602" description="UDP-glycosyltransferase 74E1">
    <location>
        <begin position="1"/>
        <end position="453"/>
    </location>
</feature>
<feature type="binding site" evidence="1">
    <location>
        <position position="279"/>
    </location>
    <ligand>
        <name>UDP-alpha-D-glucose</name>
        <dbReference type="ChEBI" id="CHEBI:58885"/>
    </ligand>
</feature>
<feature type="binding site" evidence="1">
    <location>
        <begin position="332"/>
        <end position="334"/>
    </location>
    <ligand>
        <name>UDP-alpha-D-glucose</name>
        <dbReference type="ChEBI" id="CHEBI:58885"/>
    </ligand>
</feature>
<feature type="binding site" evidence="1">
    <location>
        <begin position="349"/>
        <end position="357"/>
    </location>
    <ligand>
        <name>UDP-alpha-D-glucose</name>
        <dbReference type="ChEBI" id="CHEBI:58885"/>
    </ligand>
</feature>
<feature type="binding site" evidence="1">
    <location>
        <begin position="371"/>
        <end position="374"/>
    </location>
    <ligand>
        <name>UDP-alpha-D-glucose</name>
        <dbReference type="ChEBI" id="CHEBI:58885"/>
    </ligand>
</feature>
<reference key="1">
    <citation type="journal article" date="2000" name="Nature">
        <title>Sequence and analysis of chromosome 1 of the plant Arabidopsis thaliana.</title>
        <authorList>
            <person name="Theologis A."/>
            <person name="Ecker J.R."/>
            <person name="Palm C.J."/>
            <person name="Federspiel N.A."/>
            <person name="Kaul S."/>
            <person name="White O."/>
            <person name="Alonso J."/>
            <person name="Altafi H."/>
            <person name="Araujo R."/>
            <person name="Bowman C.L."/>
            <person name="Brooks S.Y."/>
            <person name="Buehler E."/>
            <person name="Chan A."/>
            <person name="Chao Q."/>
            <person name="Chen H."/>
            <person name="Cheuk R.F."/>
            <person name="Chin C.W."/>
            <person name="Chung M.K."/>
            <person name="Conn L."/>
            <person name="Conway A.B."/>
            <person name="Conway A.R."/>
            <person name="Creasy T.H."/>
            <person name="Dewar K."/>
            <person name="Dunn P."/>
            <person name="Etgu P."/>
            <person name="Feldblyum T.V."/>
            <person name="Feng J.-D."/>
            <person name="Fong B."/>
            <person name="Fujii C.Y."/>
            <person name="Gill J.E."/>
            <person name="Goldsmith A.D."/>
            <person name="Haas B."/>
            <person name="Hansen N.F."/>
            <person name="Hughes B."/>
            <person name="Huizar L."/>
            <person name="Hunter J.L."/>
            <person name="Jenkins J."/>
            <person name="Johnson-Hopson C."/>
            <person name="Khan S."/>
            <person name="Khaykin E."/>
            <person name="Kim C.J."/>
            <person name="Koo H.L."/>
            <person name="Kremenetskaia I."/>
            <person name="Kurtz D.B."/>
            <person name="Kwan A."/>
            <person name="Lam B."/>
            <person name="Langin-Hooper S."/>
            <person name="Lee A."/>
            <person name="Lee J.M."/>
            <person name="Lenz C.A."/>
            <person name="Li J.H."/>
            <person name="Li Y.-P."/>
            <person name="Lin X."/>
            <person name="Liu S.X."/>
            <person name="Liu Z.A."/>
            <person name="Luros J.S."/>
            <person name="Maiti R."/>
            <person name="Marziali A."/>
            <person name="Militscher J."/>
            <person name="Miranda M."/>
            <person name="Nguyen M."/>
            <person name="Nierman W.C."/>
            <person name="Osborne B.I."/>
            <person name="Pai G."/>
            <person name="Peterson J."/>
            <person name="Pham P.K."/>
            <person name="Rizzo M."/>
            <person name="Rooney T."/>
            <person name="Rowley D."/>
            <person name="Sakano H."/>
            <person name="Salzberg S.L."/>
            <person name="Schwartz J.R."/>
            <person name="Shinn P."/>
            <person name="Southwick A.M."/>
            <person name="Sun H."/>
            <person name="Tallon L.J."/>
            <person name="Tambunga G."/>
            <person name="Toriumi M.J."/>
            <person name="Town C.D."/>
            <person name="Utterback T."/>
            <person name="Van Aken S."/>
            <person name="Vaysberg M."/>
            <person name="Vysotskaia V.S."/>
            <person name="Walker M."/>
            <person name="Wu D."/>
            <person name="Yu G."/>
            <person name="Fraser C.M."/>
            <person name="Venter J.C."/>
            <person name="Davis R.W."/>
        </authorList>
    </citation>
    <scope>NUCLEOTIDE SEQUENCE [LARGE SCALE GENOMIC DNA]</scope>
    <source>
        <strain>cv. Columbia</strain>
    </source>
</reference>
<reference key="2">
    <citation type="journal article" date="2017" name="Plant J.">
        <title>Araport11: a complete reannotation of the Arabidopsis thaliana reference genome.</title>
        <authorList>
            <person name="Cheng C.Y."/>
            <person name="Krishnakumar V."/>
            <person name="Chan A.P."/>
            <person name="Thibaud-Nissen F."/>
            <person name="Schobel S."/>
            <person name="Town C.D."/>
        </authorList>
    </citation>
    <scope>GENOME REANNOTATION</scope>
    <source>
        <strain>cv. Columbia</strain>
    </source>
</reference>
<reference key="3">
    <citation type="journal article" date="2001" name="J. Biol. Chem.">
        <title>Phylogenetic analysis of the UDP-glycosyltransferase multigene family of Arabidopsis thaliana.</title>
        <authorList>
            <person name="Li Y."/>
            <person name="Baldauf S."/>
            <person name="Lim E.K."/>
            <person name="Bowles D.J."/>
        </authorList>
    </citation>
    <scope>GENE FAMILY</scope>
</reference>
<accession>P0C7P7</accession>
<accession>Q9SYK8</accession>
<gene>
    <name type="primary">UGT74E1</name>
    <name type="ordered locus">At1g05675</name>
    <name type="ORF">F3F20.12</name>
</gene>
<name>U74E1_ARATH</name>
<sequence>MREGSHVIVLPFPAQGHITPMSQFCKRLASKSLKITLVLVSDKPSPPYKTEHDTITVVPISNGFQEGQERSEDLDEYMERVESSIKNRLPKLIEDMKLSGNPPRALVYDSTMPWLLDVAHSYGLSGAVFFTQPWLVSAIYYHVFKGSFSVPSTKYGHSTLASFPSLPILNANDLPSFLCESSSYPYILRTVIDQLSNIDRVDIVLCNTFDKLEEKLLKWIKSVWPVLNIGPTVPSMYLDKRLAEDKNYGFSLFGAKIAECMEWLNSKQPSSVVYVSFGSLVVLKKDQLIELAAGLKQSGHFFLWVVRETERRKLPENYIEEIGEKGLTVSWSPQLEVLTHKSIGCFVTHCGWNSTLEGLSLGVPMIGMPHWADQPTNAKFMEDVWKVGVRVKADSDGFVRREEFVRRVEEVMEAEQGKEIRKNAEKWKVLAQEAVSEGGSSDKNINEFVSMFC</sequence>
<protein>
    <recommendedName>
        <fullName>UDP-glycosyltransferase 74E1</fullName>
        <ecNumber>2.4.1.-</ecNumber>
    </recommendedName>
</protein>